<comment type="subcellular location">
    <subcellularLocation>
        <location evidence="2">Host cytoplasm</location>
    </subcellularLocation>
</comment>
<comment type="induction">
    <text evidence="1">Expressed in the early phase of the viral replicative cycle. Expression of early genes is repressed by viral Repc (latency) and favored by viral Ner protein.</text>
</comment>
<comment type="similarity">
    <text evidence="2">Belongs to the mulikevirus gp14 protein family.</text>
</comment>
<comment type="sequence caution" evidence="2">
    <conflict type="erroneous initiation">
        <sequence resource="EMBL-CDS" id="AAA32404"/>
    </conflict>
    <text>Extended N-terminus.</text>
</comment>
<evidence type="ECO:0000269" key="1">
    <source>
    </source>
</evidence>
<evidence type="ECO:0000305" key="2"/>
<name>GP14_BPMU</name>
<proteinExistence type="evidence at transcript level"/>
<gene>
    <name type="ordered locus">Mup14</name>
</gene>
<sequence length="100" mass="11695">MNNETKFTPLNIDNVMAEKGMLERVRAIVEYGIKHNLTAREVRDIINREMNRLETVVALQNETAREEYIRRRLGLSDQDIVTDAHVFEAFEIRQHLGLTN</sequence>
<organismHost>
    <name type="scientific">Enterobacteriaceae</name>
    <dbReference type="NCBI Taxonomy" id="543"/>
</organismHost>
<keyword id="KW-0244">Early protein</keyword>
<keyword id="KW-1035">Host cytoplasm</keyword>
<keyword id="KW-1185">Reference proteome</keyword>
<reference key="1">
    <citation type="book" date="1987" name="Phage Mu">
        <title>Sequence of the left end of Mu.</title>
        <editorList>
            <person name="Symonds N."/>
            <person name="Toussaint A."/>
            <person name="van de Putte P."/>
            <person name="Howe M.M."/>
        </editorList>
        <authorList>
            <person name="Priess H."/>
            <person name="Brauer B."/>
            <person name="Schmidt C."/>
            <person name="Kamp D."/>
        </authorList>
    </citation>
    <scope>NUCLEOTIDE SEQUENCE [GENOMIC DNA]</scope>
</reference>
<reference key="2">
    <citation type="journal article" date="2002" name="J. Mol. Biol.">
        <title>Bacteriophage Mu genome sequence: analysis and comparison with Mu-like prophages in Haemophilus, Neisseria and Deinococcus.</title>
        <authorList>
            <person name="Morgan G.J."/>
            <person name="Hatfull G.F."/>
            <person name="Casjens S."/>
            <person name="Hendrix R.W."/>
        </authorList>
    </citation>
    <scope>NUCLEOTIDE SEQUENCE [LARGE SCALE GENOMIC DNA]</scope>
</reference>
<reference key="3">
    <citation type="journal article" date="1989" name="J. Bacteriol.">
        <title>Localization and regulation of bacteriophage Mu promoters.</title>
        <authorList>
            <person name="Stoddard S.F."/>
            <person name="Howe M.M."/>
        </authorList>
    </citation>
    <scope>INDUCTION</scope>
</reference>
<accession>Q38492</accession>
<accession>Q9T1X5</accession>
<dbReference type="EMBL" id="M64097">
    <property type="protein sequence ID" value="AAA32404.1"/>
    <property type="status" value="ALT_INIT"/>
    <property type="molecule type" value="Genomic_DNA"/>
</dbReference>
<dbReference type="EMBL" id="AF083977">
    <property type="protein sequence ID" value="AAF01091.1"/>
    <property type="molecule type" value="Genomic_DNA"/>
</dbReference>
<dbReference type="RefSeq" id="NP_050618.1">
    <property type="nucleotide sequence ID" value="NC_000929.1"/>
</dbReference>
<dbReference type="SMR" id="Q38492"/>
<dbReference type="GeneID" id="2636262"/>
<dbReference type="KEGG" id="vg:2636262"/>
<dbReference type="Proteomes" id="UP000002611">
    <property type="component" value="Genome"/>
</dbReference>
<dbReference type="Proteomes" id="UP000401936">
    <property type="component" value="Segment"/>
</dbReference>
<dbReference type="GO" id="GO:0030430">
    <property type="term" value="C:host cell cytoplasm"/>
    <property type="evidence" value="ECO:0007669"/>
    <property type="project" value="UniProtKB-SubCell"/>
</dbReference>
<organism>
    <name type="scientific">Escherichia phage Mu</name>
    <name type="common">Bacteriophage Mu</name>
    <dbReference type="NCBI Taxonomy" id="2681603"/>
    <lineage>
        <taxon>Viruses</taxon>
        <taxon>Duplodnaviria</taxon>
        <taxon>Heunggongvirae</taxon>
        <taxon>Uroviricota</taxon>
        <taxon>Caudoviricetes</taxon>
        <taxon>Muvirus</taxon>
        <taxon>Muvirus mu</taxon>
    </lineage>
</organism>
<feature type="chain" id="PRO_0000077809" description="Uncharacterized protein gp14">
    <location>
        <begin position="1"/>
        <end position="100"/>
    </location>
</feature>
<feature type="sequence conflict" description="In Ref. 1; AAA32404." evidence="2" ref="1">
    <original>E</original>
    <variation>L</variation>
    <location>
        <position position="91"/>
    </location>
</feature>
<protein>
    <recommendedName>
        <fullName>Uncharacterized protein gp14</fullName>
    </recommendedName>
    <alternativeName>
        <fullName>E15</fullName>
    </alternativeName>
    <alternativeName>
        <fullName>Gene product 14</fullName>
        <shortName>gp14</shortName>
    </alternativeName>
</protein>